<feature type="chain" id="PRO_0000328379" description="NADP-dependent malic enzyme">
    <location>
        <begin position="1"/>
        <end position="544"/>
    </location>
</feature>
<feature type="region of interest" description="Disordered" evidence="2">
    <location>
        <begin position="1"/>
        <end position="22"/>
    </location>
</feature>
<feature type="compositionally biased region" description="Polar residues" evidence="2">
    <location>
        <begin position="12"/>
        <end position="21"/>
    </location>
</feature>
<feature type="active site" description="Proton donor" evidence="1">
    <location>
        <position position="92"/>
    </location>
</feature>
<feature type="active site" description="Proton acceptor" evidence="1">
    <location>
        <position position="163"/>
    </location>
</feature>
<feature type="binding site" evidence="1">
    <location>
        <position position="145"/>
    </location>
    <ligand>
        <name>NAD(+)</name>
        <dbReference type="ChEBI" id="CHEBI:57540"/>
    </ligand>
</feature>
<feature type="binding site" evidence="1">
    <location>
        <position position="234"/>
    </location>
    <ligand>
        <name>a divalent metal cation</name>
        <dbReference type="ChEBI" id="CHEBI:60240"/>
    </ligand>
</feature>
<feature type="binding site" evidence="1">
    <location>
        <position position="235"/>
    </location>
    <ligand>
        <name>a divalent metal cation</name>
        <dbReference type="ChEBI" id="CHEBI:60240"/>
    </ligand>
</feature>
<feature type="binding site" evidence="1">
    <location>
        <position position="258"/>
    </location>
    <ligand>
        <name>a divalent metal cation</name>
        <dbReference type="ChEBI" id="CHEBI:60240"/>
    </ligand>
</feature>
<feature type="binding site" evidence="1">
    <location>
        <position position="258"/>
    </location>
    <ligand>
        <name>NAD(+)</name>
        <dbReference type="ChEBI" id="CHEBI:57540"/>
    </ligand>
</feature>
<feature type="binding site" evidence="1">
    <location>
        <begin position="287"/>
        <end position="303"/>
    </location>
    <ligand>
        <name>NADP(+)</name>
        <dbReference type="ChEBI" id="CHEBI:58349"/>
    </ligand>
</feature>
<feature type="binding site" evidence="1">
    <location>
        <position position="400"/>
    </location>
    <ligand>
        <name>NAD(+)</name>
        <dbReference type="ChEBI" id="CHEBI:57540"/>
    </ligand>
</feature>
<feature type="site" description="Important for activity" evidence="1">
    <location>
        <position position="258"/>
    </location>
</feature>
<keyword id="KW-0963">Cytoplasm</keyword>
<keyword id="KW-0479">Metal-binding</keyword>
<keyword id="KW-0521">NADP</keyword>
<keyword id="KW-0560">Oxidoreductase</keyword>
<keyword id="KW-1185">Reference proteome</keyword>
<reference key="1">
    <citation type="journal article" date="2003" name="Eukaryot. Cell">
        <title>Dictyostelium discoideum developmentally regulated genes whose expression is dependent on MADS box transcription factor SrfA.</title>
        <authorList>
            <person name="Escalante R."/>
            <person name="Moreno N."/>
            <person name="Sastre L."/>
        </authorList>
    </citation>
    <scope>NUCLEOTIDE SEQUENCE [GENOMIC DNA]</scope>
    <scope>TISSUE SPECIFICITY</scope>
    <scope>DEVELOPMENTAL STAGE</scope>
    <scope>INDUCTION</scope>
    <source>
        <strain>AX4</strain>
    </source>
</reference>
<reference key="2">
    <citation type="journal article" date="2002" name="Nature">
        <title>Sequence and analysis of chromosome 2 of Dictyostelium discoideum.</title>
        <authorList>
            <person name="Gloeckner G."/>
            <person name="Eichinger L."/>
            <person name="Szafranski K."/>
            <person name="Pachebat J.A."/>
            <person name="Bankier A.T."/>
            <person name="Dear P.H."/>
            <person name="Lehmann R."/>
            <person name="Baumgart C."/>
            <person name="Parra G."/>
            <person name="Abril J.F."/>
            <person name="Guigo R."/>
            <person name="Kumpf K."/>
            <person name="Tunggal B."/>
            <person name="Cox E.C."/>
            <person name="Quail M.A."/>
            <person name="Platzer M."/>
            <person name="Rosenthal A."/>
            <person name="Noegel A.A."/>
        </authorList>
    </citation>
    <scope>NUCLEOTIDE SEQUENCE [LARGE SCALE GENOMIC DNA]</scope>
    <source>
        <strain>AX4</strain>
    </source>
</reference>
<reference key="3">
    <citation type="journal article" date="2005" name="Nature">
        <title>The genome of the social amoeba Dictyostelium discoideum.</title>
        <authorList>
            <person name="Eichinger L."/>
            <person name="Pachebat J.A."/>
            <person name="Gloeckner G."/>
            <person name="Rajandream M.A."/>
            <person name="Sucgang R."/>
            <person name="Berriman M."/>
            <person name="Song J."/>
            <person name="Olsen R."/>
            <person name="Szafranski K."/>
            <person name="Xu Q."/>
            <person name="Tunggal B."/>
            <person name="Kummerfeld S."/>
            <person name="Madera M."/>
            <person name="Konfortov B.A."/>
            <person name="Rivero F."/>
            <person name="Bankier A.T."/>
            <person name="Lehmann R."/>
            <person name="Hamlin N."/>
            <person name="Davies R."/>
            <person name="Gaudet P."/>
            <person name="Fey P."/>
            <person name="Pilcher K."/>
            <person name="Chen G."/>
            <person name="Saunders D."/>
            <person name="Sodergren E.J."/>
            <person name="Davis P."/>
            <person name="Kerhornou A."/>
            <person name="Nie X."/>
            <person name="Hall N."/>
            <person name="Anjard C."/>
            <person name="Hemphill L."/>
            <person name="Bason N."/>
            <person name="Farbrother P."/>
            <person name="Desany B."/>
            <person name="Just E."/>
            <person name="Morio T."/>
            <person name="Rost R."/>
            <person name="Churcher C.M."/>
            <person name="Cooper J."/>
            <person name="Haydock S."/>
            <person name="van Driessche N."/>
            <person name="Cronin A."/>
            <person name="Goodhead I."/>
            <person name="Muzny D.M."/>
            <person name="Mourier T."/>
            <person name="Pain A."/>
            <person name="Lu M."/>
            <person name="Harper D."/>
            <person name="Lindsay R."/>
            <person name="Hauser H."/>
            <person name="James K.D."/>
            <person name="Quiles M."/>
            <person name="Madan Babu M."/>
            <person name="Saito T."/>
            <person name="Buchrieser C."/>
            <person name="Wardroper A."/>
            <person name="Felder M."/>
            <person name="Thangavelu M."/>
            <person name="Johnson D."/>
            <person name="Knights A."/>
            <person name="Loulseged H."/>
            <person name="Mungall K.L."/>
            <person name="Oliver K."/>
            <person name="Price C."/>
            <person name="Quail M.A."/>
            <person name="Urushihara H."/>
            <person name="Hernandez J."/>
            <person name="Rabbinowitsch E."/>
            <person name="Steffen D."/>
            <person name="Sanders M."/>
            <person name="Ma J."/>
            <person name="Kohara Y."/>
            <person name="Sharp S."/>
            <person name="Simmonds M.N."/>
            <person name="Spiegler S."/>
            <person name="Tivey A."/>
            <person name="Sugano S."/>
            <person name="White B."/>
            <person name="Walker D."/>
            <person name="Woodward J.R."/>
            <person name="Winckler T."/>
            <person name="Tanaka Y."/>
            <person name="Shaulsky G."/>
            <person name="Schleicher M."/>
            <person name="Weinstock G.M."/>
            <person name="Rosenthal A."/>
            <person name="Cox E.C."/>
            <person name="Chisholm R.L."/>
            <person name="Gibbs R.A."/>
            <person name="Loomis W.F."/>
            <person name="Platzer M."/>
            <person name="Kay R.R."/>
            <person name="Williams J.G."/>
            <person name="Dear P.H."/>
            <person name="Noegel A.A."/>
            <person name="Barrell B.G."/>
            <person name="Kuspa A."/>
        </authorList>
    </citation>
    <scope>NUCLEOTIDE SEQUENCE [LARGE SCALE GENOMIC DNA]</scope>
    <source>
        <strain>AX4</strain>
    </source>
</reference>
<reference key="4">
    <citation type="journal article" date="2004" name="Eukaryot. Cell">
        <title>Identification of genes dependent on the MADS box transcription factor SrfA in Dictyostelium discoideum development.</title>
        <authorList>
            <person name="Escalante R."/>
            <person name="Iranfar N."/>
            <person name="Sastre L."/>
            <person name="Loomis W.F."/>
        </authorList>
    </citation>
    <scope>DEVELOPMENTAL STAGE</scope>
    <scope>INDUCTION BY SRFA</scope>
</reference>
<organism>
    <name type="scientific">Dictyostelium discoideum</name>
    <name type="common">Social amoeba</name>
    <dbReference type="NCBI Taxonomy" id="44689"/>
    <lineage>
        <taxon>Eukaryota</taxon>
        <taxon>Amoebozoa</taxon>
        <taxon>Evosea</taxon>
        <taxon>Eumycetozoa</taxon>
        <taxon>Dictyostelia</taxon>
        <taxon>Dictyosteliales</taxon>
        <taxon>Dictyosteliaceae</taxon>
        <taxon>Dictyostelium</taxon>
    </lineage>
</organism>
<protein>
    <recommendedName>
        <fullName>NADP-dependent malic enzyme</fullName>
        <shortName>NADP-ME</shortName>
        <ecNumber>1.1.1.40</ecNumber>
    </recommendedName>
    <alternativeName>
        <fullName>SrfA-induced gene A protein</fullName>
    </alternativeName>
</protein>
<dbReference type="EC" id="1.1.1.40"/>
<dbReference type="EMBL" id="AY387644">
    <property type="protein sequence ID" value="AAQ95658.1"/>
    <property type="molecule type" value="Genomic_DNA"/>
</dbReference>
<dbReference type="EMBL" id="AAFI02000008">
    <property type="protein sequence ID" value="EAL71186.1"/>
    <property type="molecule type" value="Genomic_DNA"/>
</dbReference>
<dbReference type="RefSeq" id="XP_645111.1">
    <property type="nucleotide sequence ID" value="XM_640019.1"/>
</dbReference>
<dbReference type="SMR" id="Q6TU48"/>
<dbReference type="FunCoup" id="Q6TU48">
    <property type="interactions" value="178"/>
</dbReference>
<dbReference type="STRING" id="44689.Q6TU48"/>
<dbReference type="PaxDb" id="44689-DDB0191268"/>
<dbReference type="EnsemblProtists" id="EAL71186">
    <property type="protein sequence ID" value="EAL71186"/>
    <property type="gene ID" value="DDB_G0272524"/>
</dbReference>
<dbReference type="GeneID" id="8618505"/>
<dbReference type="KEGG" id="ddi:DDB_G0272524"/>
<dbReference type="dictyBase" id="DDB_G0272524">
    <property type="gene designation" value="malA"/>
</dbReference>
<dbReference type="VEuPathDB" id="AmoebaDB:DDB_G0272524"/>
<dbReference type="eggNOG" id="KOG1257">
    <property type="taxonomic scope" value="Eukaryota"/>
</dbReference>
<dbReference type="HOGENOM" id="CLU_011405_5_0_1"/>
<dbReference type="InParanoid" id="Q6TU48"/>
<dbReference type="OMA" id="ANYDTAN"/>
<dbReference type="PhylomeDB" id="Q6TU48"/>
<dbReference type="PRO" id="PR:Q6TU48"/>
<dbReference type="Proteomes" id="UP000002195">
    <property type="component" value="Chromosome 2"/>
</dbReference>
<dbReference type="GO" id="GO:0005737">
    <property type="term" value="C:cytoplasm"/>
    <property type="evidence" value="ECO:0007669"/>
    <property type="project" value="UniProtKB-SubCell"/>
</dbReference>
<dbReference type="GO" id="GO:0004471">
    <property type="term" value="F:malate dehydrogenase (decarboxylating) (NAD+) activity"/>
    <property type="evidence" value="ECO:0000318"/>
    <property type="project" value="GO_Central"/>
</dbReference>
<dbReference type="GO" id="GO:0004473">
    <property type="term" value="F:malate dehydrogenase (decarboxylating) (NADP+) activity"/>
    <property type="evidence" value="ECO:0000250"/>
    <property type="project" value="dictyBase"/>
</dbReference>
<dbReference type="GO" id="GO:0004470">
    <property type="term" value="F:malic enzyme activity"/>
    <property type="evidence" value="ECO:0000250"/>
    <property type="project" value="dictyBase"/>
</dbReference>
<dbReference type="GO" id="GO:0046872">
    <property type="term" value="F:metal ion binding"/>
    <property type="evidence" value="ECO:0007669"/>
    <property type="project" value="UniProtKB-KW"/>
</dbReference>
<dbReference type="GO" id="GO:0051287">
    <property type="term" value="F:NAD binding"/>
    <property type="evidence" value="ECO:0007669"/>
    <property type="project" value="InterPro"/>
</dbReference>
<dbReference type="GO" id="GO:0008948">
    <property type="term" value="F:oxaloacetate decarboxylase activity"/>
    <property type="evidence" value="ECO:0007669"/>
    <property type="project" value="RHEA"/>
</dbReference>
<dbReference type="GO" id="GO:0006108">
    <property type="term" value="P:malate metabolic process"/>
    <property type="evidence" value="ECO:0000318"/>
    <property type="project" value="GO_Central"/>
</dbReference>
<dbReference type="GO" id="GO:0006090">
    <property type="term" value="P:pyruvate metabolic process"/>
    <property type="evidence" value="ECO:0000318"/>
    <property type="project" value="GO_Central"/>
</dbReference>
<dbReference type="CDD" id="cd05312">
    <property type="entry name" value="NAD_bind_1_malic_enz"/>
    <property type="match status" value="1"/>
</dbReference>
<dbReference type="FunFam" id="3.40.50.720:FF:000182">
    <property type="entry name" value="NAD-dependent malic enzyme"/>
    <property type="match status" value="1"/>
</dbReference>
<dbReference type="Gene3D" id="3.40.50.10380">
    <property type="entry name" value="Malic enzyme, N-terminal domain"/>
    <property type="match status" value="1"/>
</dbReference>
<dbReference type="Gene3D" id="3.40.50.720">
    <property type="entry name" value="NAD(P)-binding Rossmann-like Domain"/>
    <property type="match status" value="1"/>
</dbReference>
<dbReference type="InterPro" id="IPR046346">
    <property type="entry name" value="Aminoacid_DH-like_N_sf"/>
</dbReference>
<dbReference type="InterPro" id="IPR015884">
    <property type="entry name" value="Malic_enzyme_CS"/>
</dbReference>
<dbReference type="InterPro" id="IPR012301">
    <property type="entry name" value="Malic_N_dom"/>
</dbReference>
<dbReference type="InterPro" id="IPR037062">
    <property type="entry name" value="Malic_N_dom_sf"/>
</dbReference>
<dbReference type="InterPro" id="IPR012302">
    <property type="entry name" value="Malic_NAD-bd"/>
</dbReference>
<dbReference type="InterPro" id="IPR001891">
    <property type="entry name" value="Malic_OxRdtase"/>
</dbReference>
<dbReference type="InterPro" id="IPR036291">
    <property type="entry name" value="NAD(P)-bd_dom_sf"/>
</dbReference>
<dbReference type="NCBIfam" id="NF010052">
    <property type="entry name" value="PRK13529.1"/>
    <property type="match status" value="1"/>
</dbReference>
<dbReference type="PANTHER" id="PTHR23406">
    <property type="entry name" value="MALIC ENZYME-RELATED"/>
    <property type="match status" value="1"/>
</dbReference>
<dbReference type="PANTHER" id="PTHR23406:SF32">
    <property type="entry name" value="NADP-DEPENDENT MALIC ENZYME"/>
    <property type="match status" value="1"/>
</dbReference>
<dbReference type="Pfam" id="PF00390">
    <property type="entry name" value="malic"/>
    <property type="match status" value="1"/>
</dbReference>
<dbReference type="Pfam" id="PF03949">
    <property type="entry name" value="Malic_M"/>
    <property type="match status" value="1"/>
</dbReference>
<dbReference type="PIRSF" id="PIRSF000106">
    <property type="entry name" value="ME"/>
    <property type="match status" value="1"/>
</dbReference>
<dbReference type="PRINTS" id="PR00072">
    <property type="entry name" value="MALOXRDTASE"/>
</dbReference>
<dbReference type="SMART" id="SM01274">
    <property type="entry name" value="malic"/>
    <property type="match status" value="1"/>
</dbReference>
<dbReference type="SMART" id="SM00919">
    <property type="entry name" value="Malic_M"/>
    <property type="match status" value="1"/>
</dbReference>
<dbReference type="SUPFAM" id="SSF53223">
    <property type="entry name" value="Aminoacid dehydrogenase-like, N-terminal domain"/>
    <property type="match status" value="1"/>
</dbReference>
<dbReference type="SUPFAM" id="SSF51735">
    <property type="entry name" value="NAD(P)-binding Rossmann-fold domains"/>
    <property type="match status" value="1"/>
</dbReference>
<dbReference type="PROSITE" id="PS00331">
    <property type="entry name" value="MALIC_ENZYMES"/>
    <property type="match status" value="1"/>
</dbReference>
<sequence>MQNKPSFILRNPSANKGTGFNNEEREKLGLKGLLPPKVESLQEQSDRALSQFTSFNTNLERYIFLNCLRDRNETLFYYLLSNNLELMMPIIYTPTVGEACQKFGNEFRFAQGMYFASQDKGNIRAMMDNWPAEGVDIIVVSDGSRILGLGDLGTNGMGIPVGKLQLYVAGAGFCPTRTLPVIIDSGTNTKKYLEDKYYLGERHPRIPDSEYYPLVDEFLAAAFNKWPKVIVQFEDISNDHCFNLLDEYRNKYLCFNDDIQGTGSVILSGFINAVRSVQKPIKEHRMVFLGAGSAGIGVADCIMSLFDEAGVSKEEARKSFWFVDSKGLITTTRGDELTSQKKQYAREDYTYQLKSLLEVVRDVKPTAIIGLSGIGGSFSQEVIEEMAKHVEKPIVFALSNPTTNAECTAEQAYQWTDGRCIFASGSPFKPVEYKGKTFVPGQGNNMYIFPGLGLAASVCEAKHVTDAMIITAAKTLASFVEDSEVLTGKIYPGLQHIREISTRIAVKVIEKAYEEGMAQLPRPDNIEALVKSRQYVPSYDKSKN</sequence>
<evidence type="ECO:0000250" key="1"/>
<evidence type="ECO:0000256" key="2">
    <source>
        <dbReference type="SAM" id="MobiDB-lite"/>
    </source>
</evidence>
<evidence type="ECO:0000269" key="3">
    <source>
    </source>
</evidence>
<evidence type="ECO:0000269" key="4">
    <source>
    </source>
</evidence>
<evidence type="ECO:0000305" key="5"/>
<comment type="catalytic activity">
    <reaction>
        <text>(S)-malate + NADP(+) = pyruvate + CO2 + NADPH</text>
        <dbReference type="Rhea" id="RHEA:18253"/>
        <dbReference type="ChEBI" id="CHEBI:15361"/>
        <dbReference type="ChEBI" id="CHEBI:15589"/>
        <dbReference type="ChEBI" id="CHEBI:16526"/>
        <dbReference type="ChEBI" id="CHEBI:57783"/>
        <dbReference type="ChEBI" id="CHEBI:58349"/>
        <dbReference type="EC" id="1.1.1.40"/>
    </reaction>
</comment>
<comment type="catalytic activity">
    <reaction>
        <text>oxaloacetate + H(+) = pyruvate + CO2</text>
        <dbReference type="Rhea" id="RHEA:15641"/>
        <dbReference type="ChEBI" id="CHEBI:15361"/>
        <dbReference type="ChEBI" id="CHEBI:15378"/>
        <dbReference type="ChEBI" id="CHEBI:16452"/>
        <dbReference type="ChEBI" id="CHEBI:16526"/>
        <dbReference type="EC" id="1.1.1.40"/>
    </reaction>
</comment>
<comment type="cofactor">
    <cofactor evidence="1">
        <name>Mg(2+)</name>
        <dbReference type="ChEBI" id="CHEBI:18420"/>
    </cofactor>
    <cofactor evidence="1">
        <name>Mn(2+)</name>
        <dbReference type="ChEBI" id="CHEBI:29035"/>
    </cofactor>
    <text evidence="1">Divalent metal cations. Prefers magnesium or manganese.</text>
</comment>
<comment type="subunit">
    <text evidence="1">Homotetramer.</text>
</comment>
<comment type="subcellular location">
    <subcellularLocation>
        <location evidence="5">Cytoplasm</location>
    </subcellularLocation>
</comment>
<comment type="tissue specificity">
    <text evidence="3">Expressed in the fruiting body.</text>
</comment>
<comment type="developmental stage">
    <text evidence="3 4">Expressed at late stage of development (20 to 24 hours).</text>
</comment>
<comment type="induction">
    <text evidence="3 4">By cAMP and the MADS-box protein srfA.</text>
</comment>
<comment type="similarity">
    <text evidence="5">Belongs to the malic enzymes family.</text>
</comment>
<proteinExistence type="evidence at transcript level"/>
<accession>Q6TU48</accession>
<accession>Q559J5</accession>
<accession>Q7KWU9</accession>
<name>MAOX_DICDI</name>
<gene>
    <name type="primary">malA</name>
    <name type="synonym">sigA</name>
    <name type="ORF">DDB_G0272524</name>
</gene>